<reference key="1">
    <citation type="journal article" date="2004" name="Science">
        <title>The genomic sequence of the accidental pathogen Legionella pneumophila.</title>
        <authorList>
            <person name="Chien M."/>
            <person name="Morozova I."/>
            <person name="Shi S."/>
            <person name="Sheng H."/>
            <person name="Chen J."/>
            <person name="Gomez S.M."/>
            <person name="Asamani G."/>
            <person name="Hill K."/>
            <person name="Nuara J."/>
            <person name="Feder M."/>
            <person name="Rineer J."/>
            <person name="Greenberg J.J."/>
            <person name="Steshenko V."/>
            <person name="Park S.H."/>
            <person name="Zhao B."/>
            <person name="Teplitskaya E."/>
            <person name="Edwards J.R."/>
            <person name="Pampou S."/>
            <person name="Georghiou A."/>
            <person name="Chou I.-C."/>
            <person name="Iannuccilli W."/>
            <person name="Ulz M.E."/>
            <person name="Kim D.H."/>
            <person name="Geringer-Sameth A."/>
            <person name="Goldsberry C."/>
            <person name="Morozov P."/>
            <person name="Fischer S.G."/>
            <person name="Segal G."/>
            <person name="Qu X."/>
            <person name="Rzhetsky A."/>
            <person name="Zhang P."/>
            <person name="Cayanis E."/>
            <person name="De Jong P.J."/>
            <person name="Ju J."/>
            <person name="Kalachikov S."/>
            <person name="Shuman H.A."/>
            <person name="Russo J.J."/>
        </authorList>
    </citation>
    <scope>NUCLEOTIDE SEQUENCE [LARGE SCALE GENOMIC DNA]</scope>
    <source>
        <strain>Philadelphia 1 / ATCC 33152 / DSM 7513</strain>
    </source>
</reference>
<proteinExistence type="inferred from homology"/>
<protein>
    <recommendedName>
        <fullName evidence="1">DNA ligase</fullName>
        <ecNumber evidence="1">6.5.1.2</ecNumber>
    </recommendedName>
    <alternativeName>
        <fullName evidence="1">Polydeoxyribonucleotide synthase [NAD(+)]</fullName>
    </alternativeName>
</protein>
<dbReference type="EC" id="6.5.1.2" evidence="1"/>
<dbReference type="EMBL" id="AE017354">
    <property type="protein sequence ID" value="AAU27045.1"/>
    <property type="status" value="ALT_INIT"/>
    <property type="molecule type" value="Genomic_DNA"/>
</dbReference>
<dbReference type="RefSeq" id="WP_016356806.1">
    <property type="nucleotide sequence ID" value="NC_002942.5"/>
</dbReference>
<dbReference type="RefSeq" id="YP_094992.1">
    <property type="nucleotide sequence ID" value="NC_002942.5"/>
</dbReference>
<dbReference type="SMR" id="Q5ZWX6"/>
<dbReference type="STRING" id="272624.lpg0958"/>
<dbReference type="PaxDb" id="272624-lpg0958"/>
<dbReference type="GeneID" id="57034946"/>
<dbReference type="KEGG" id="lpn:lpg0958"/>
<dbReference type="PATRIC" id="fig|272624.6.peg.991"/>
<dbReference type="eggNOG" id="COG0272">
    <property type="taxonomic scope" value="Bacteria"/>
</dbReference>
<dbReference type="HOGENOM" id="CLU_007764_2_1_6"/>
<dbReference type="OrthoDB" id="9759736at2"/>
<dbReference type="Proteomes" id="UP000000609">
    <property type="component" value="Chromosome"/>
</dbReference>
<dbReference type="GO" id="GO:0005829">
    <property type="term" value="C:cytosol"/>
    <property type="evidence" value="ECO:0007669"/>
    <property type="project" value="TreeGrafter"/>
</dbReference>
<dbReference type="GO" id="GO:0003677">
    <property type="term" value="F:DNA binding"/>
    <property type="evidence" value="ECO:0007669"/>
    <property type="project" value="InterPro"/>
</dbReference>
<dbReference type="GO" id="GO:0003911">
    <property type="term" value="F:DNA ligase (NAD+) activity"/>
    <property type="evidence" value="ECO:0007669"/>
    <property type="project" value="UniProtKB-UniRule"/>
</dbReference>
<dbReference type="GO" id="GO:0046872">
    <property type="term" value="F:metal ion binding"/>
    <property type="evidence" value="ECO:0007669"/>
    <property type="project" value="UniProtKB-KW"/>
</dbReference>
<dbReference type="GO" id="GO:0006281">
    <property type="term" value="P:DNA repair"/>
    <property type="evidence" value="ECO:0007669"/>
    <property type="project" value="UniProtKB-KW"/>
</dbReference>
<dbReference type="GO" id="GO:0006260">
    <property type="term" value="P:DNA replication"/>
    <property type="evidence" value="ECO:0007669"/>
    <property type="project" value="UniProtKB-KW"/>
</dbReference>
<dbReference type="CDD" id="cd17748">
    <property type="entry name" value="BRCT_DNA_ligase_like"/>
    <property type="match status" value="1"/>
</dbReference>
<dbReference type="CDD" id="cd00114">
    <property type="entry name" value="LIGANc"/>
    <property type="match status" value="1"/>
</dbReference>
<dbReference type="FunFam" id="1.10.150.20:FF:000006">
    <property type="entry name" value="DNA ligase"/>
    <property type="match status" value="1"/>
</dbReference>
<dbReference type="FunFam" id="1.10.150.20:FF:000007">
    <property type="entry name" value="DNA ligase"/>
    <property type="match status" value="1"/>
</dbReference>
<dbReference type="FunFam" id="2.40.50.140:FF:000012">
    <property type="entry name" value="DNA ligase"/>
    <property type="match status" value="1"/>
</dbReference>
<dbReference type="FunFam" id="3.30.470.30:FF:000001">
    <property type="entry name" value="DNA ligase"/>
    <property type="match status" value="1"/>
</dbReference>
<dbReference type="Gene3D" id="6.20.10.30">
    <property type="match status" value="1"/>
</dbReference>
<dbReference type="Gene3D" id="1.10.150.20">
    <property type="entry name" value="5' to 3' exonuclease, C-terminal subdomain"/>
    <property type="match status" value="2"/>
</dbReference>
<dbReference type="Gene3D" id="3.40.50.10190">
    <property type="entry name" value="BRCT domain"/>
    <property type="match status" value="1"/>
</dbReference>
<dbReference type="Gene3D" id="3.30.470.30">
    <property type="entry name" value="DNA ligase/mRNA capping enzyme"/>
    <property type="match status" value="1"/>
</dbReference>
<dbReference type="Gene3D" id="1.10.287.610">
    <property type="entry name" value="Helix hairpin bin"/>
    <property type="match status" value="1"/>
</dbReference>
<dbReference type="Gene3D" id="2.40.50.140">
    <property type="entry name" value="Nucleic acid-binding proteins"/>
    <property type="match status" value="1"/>
</dbReference>
<dbReference type="HAMAP" id="MF_01588">
    <property type="entry name" value="DNA_ligase_A"/>
    <property type="match status" value="1"/>
</dbReference>
<dbReference type="InterPro" id="IPR001357">
    <property type="entry name" value="BRCT_dom"/>
</dbReference>
<dbReference type="InterPro" id="IPR036420">
    <property type="entry name" value="BRCT_dom_sf"/>
</dbReference>
<dbReference type="InterPro" id="IPR041663">
    <property type="entry name" value="DisA/LigA_HHH"/>
</dbReference>
<dbReference type="InterPro" id="IPR001679">
    <property type="entry name" value="DNA_ligase"/>
</dbReference>
<dbReference type="InterPro" id="IPR018239">
    <property type="entry name" value="DNA_ligase_AS"/>
</dbReference>
<dbReference type="InterPro" id="IPR033136">
    <property type="entry name" value="DNA_ligase_CS"/>
</dbReference>
<dbReference type="InterPro" id="IPR013839">
    <property type="entry name" value="DNAligase_adenylation"/>
</dbReference>
<dbReference type="InterPro" id="IPR013840">
    <property type="entry name" value="DNAligase_N"/>
</dbReference>
<dbReference type="InterPro" id="IPR003583">
    <property type="entry name" value="Hlx-hairpin-Hlx_DNA-bd_motif"/>
</dbReference>
<dbReference type="InterPro" id="IPR012340">
    <property type="entry name" value="NA-bd_OB-fold"/>
</dbReference>
<dbReference type="InterPro" id="IPR004150">
    <property type="entry name" value="NAD_DNA_ligase_OB"/>
</dbReference>
<dbReference type="InterPro" id="IPR010994">
    <property type="entry name" value="RuvA_2-like"/>
</dbReference>
<dbReference type="InterPro" id="IPR004149">
    <property type="entry name" value="Znf_DNAligase_C4"/>
</dbReference>
<dbReference type="NCBIfam" id="TIGR00575">
    <property type="entry name" value="dnlj"/>
    <property type="match status" value="1"/>
</dbReference>
<dbReference type="NCBIfam" id="NF005932">
    <property type="entry name" value="PRK07956.1"/>
    <property type="match status" value="1"/>
</dbReference>
<dbReference type="PANTHER" id="PTHR23389">
    <property type="entry name" value="CHROMOSOME TRANSMISSION FIDELITY FACTOR 18"/>
    <property type="match status" value="1"/>
</dbReference>
<dbReference type="PANTHER" id="PTHR23389:SF9">
    <property type="entry name" value="DNA LIGASE"/>
    <property type="match status" value="1"/>
</dbReference>
<dbReference type="Pfam" id="PF00533">
    <property type="entry name" value="BRCT"/>
    <property type="match status" value="1"/>
</dbReference>
<dbReference type="Pfam" id="PF01653">
    <property type="entry name" value="DNA_ligase_aden"/>
    <property type="match status" value="1"/>
</dbReference>
<dbReference type="Pfam" id="PF03120">
    <property type="entry name" value="DNA_ligase_OB"/>
    <property type="match status" value="1"/>
</dbReference>
<dbReference type="Pfam" id="PF03119">
    <property type="entry name" value="DNA_ligase_ZBD"/>
    <property type="match status" value="1"/>
</dbReference>
<dbReference type="Pfam" id="PF12826">
    <property type="entry name" value="HHH_2"/>
    <property type="match status" value="1"/>
</dbReference>
<dbReference type="Pfam" id="PF14520">
    <property type="entry name" value="HHH_5"/>
    <property type="match status" value="1"/>
</dbReference>
<dbReference type="Pfam" id="PF22745">
    <property type="entry name" value="Nlig-Ia"/>
    <property type="match status" value="1"/>
</dbReference>
<dbReference type="PIRSF" id="PIRSF001604">
    <property type="entry name" value="LigA"/>
    <property type="match status" value="1"/>
</dbReference>
<dbReference type="SMART" id="SM00292">
    <property type="entry name" value="BRCT"/>
    <property type="match status" value="1"/>
</dbReference>
<dbReference type="SMART" id="SM00278">
    <property type="entry name" value="HhH1"/>
    <property type="match status" value="4"/>
</dbReference>
<dbReference type="SMART" id="SM00532">
    <property type="entry name" value="LIGANc"/>
    <property type="match status" value="1"/>
</dbReference>
<dbReference type="SUPFAM" id="SSF52113">
    <property type="entry name" value="BRCT domain"/>
    <property type="match status" value="1"/>
</dbReference>
<dbReference type="SUPFAM" id="SSF56091">
    <property type="entry name" value="DNA ligase/mRNA capping enzyme, catalytic domain"/>
    <property type="match status" value="1"/>
</dbReference>
<dbReference type="SUPFAM" id="SSF50249">
    <property type="entry name" value="Nucleic acid-binding proteins"/>
    <property type="match status" value="1"/>
</dbReference>
<dbReference type="SUPFAM" id="SSF47781">
    <property type="entry name" value="RuvA domain 2-like"/>
    <property type="match status" value="1"/>
</dbReference>
<dbReference type="PROSITE" id="PS50172">
    <property type="entry name" value="BRCT"/>
    <property type="match status" value="1"/>
</dbReference>
<dbReference type="PROSITE" id="PS01055">
    <property type="entry name" value="DNA_LIGASE_N1"/>
    <property type="match status" value="1"/>
</dbReference>
<dbReference type="PROSITE" id="PS01056">
    <property type="entry name" value="DNA_LIGASE_N2"/>
    <property type="match status" value="1"/>
</dbReference>
<gene>
    <name evidence="1" type="primary">ligA</name>
    <name type="ordered locus">lpg0958</name>
</gene>
<evidence type="ECO:0000255" key="1">
    <source>
        <dbReference type="HAMAP-Rule" id="MF_01588"/>
    </source>
</evidence>
<evidence type="ECO:0000305" key="2"/>
<name>DNLJ_LEGPH</name>
<keyword id="KW-0227">DNA damage</keyword>
<keyword id="KW-0234">DNA repair</keyword>
<keyword id="KW-0235">DNA replication</keyword>
<keyword id="KW-0436">Ligase</keyword>
<keyword id="KW-0460">Magnesium</keyword>
<keyword id="KW-0464">Manganese</keyword>
<keyword id="KW-0479">Metal-binding</keyword>
<keyword id="KW-0520">NAD</keyword>
<keyword id="KW-1185">Reference proteome</keyword>
<keyword id="KW-0862">Zinc</keyword>
<comment type="function">
    <text evidence="1">DNA ligase that catalyzes the formation of phosphodiester linkages between 5'-phosphoryl and 3'-hydroxyl groups in double-stranded DNA using NAD as a coenzyme and as the energy source for the reaction. It is essential for DNA replication and repair of damaged DNA.</text>
</comment>
<comment type="catalytic activity">
    <reaction evidence="1">
        <text>NAD(+) + (deoxyribonucleotide)n-3'-hydroxyl + 5'-phospho-(deoxyribonucleotide)m = (deoxyribonucleotide)n+m + AMP + beta-nicotinamide D-nucleotide.</text>
        <dbReference type="EC" id="6.5.1.2"/>
    </reaction>
</comment>
<comment type="cofactor">
    <cofactor evidence="1">
        <name>Mg(2+)</name>
        <dbReference type="ChEBI" id="CHEBI:18420"/>
    </cofactor>
    <cofactor evidence="1">
        <name>Mn(2+)</name>
        <dbReference type="ChEBI" id="CHEBI:29035"/>
    </cofactor>
</comment>
<comment type="similarity">
    <text evidence="1">Belongs to the NAD-dependent DNA ligase family. LigA subfamily.</text>
</comment>
<comment type="sequence caution" evidence="2">
    <conflict type="erroneous initiation">
        <sequence resource="EMBL-CDS" id="AAU27045"/>
    </conflict>
</comment>
<feature type="chain" id="PRO_0000313288" description="DNA ligase">
    <location>
        <begin position="1"/>
        <end position="673"/>
    </location>
</feature>
<feature type="domain" description="BRCT" evidence="1">
    <location>
        <begin position="595"/>
        <end position="673"/>
    </location>
</feature>
<feature type="active site" description="N6-AMP-lysine intermediate" evidence="1">
    <location>
        <position position="118"/>
    </location>
</feature>
<feature type="binding site" evidence="1">
    <location>
        <begin position="34"/>
        <end position="38"/>
    </location>
    <ligand>
        <name>NAD(+)</name>
        <dbReference type="ChEBI" id="CHEBI:57540"/>
    </ligand>
</feature>
<feature type="binding site" evidence="1">
    <location>
        <begin position="83"/>
        <end position="84"/>
    </location>
    <ligand>
        <name>NAD(+)</name>
        <dbReference type="ChEBI" id="CHEBI:57540"/>
    </ligand>
</feature>
<feature type="binding site" evidence="1">
    <location>
        <position position="116"/>
    </location>
    <ligand>
        <name>NAD(+)</name>
        <dbReference type="ChEBI" id="CHEBI:57540"/>
    </ligand>
</feature>
<feature type="binding site" evidence="1">
    <location>
        <position position="139"/>
    </location>
    <ligand>
        <name>NAD(+)</name>
        <dbReference type="ChEBI" id="CHEBI:57540"/>
    </ligand>
</feature>
<feature type="binding site" evidence="1">
    <location>
        <position position="176"/>
    </location>
    <ligand>
        <name>NAD(+)</name>
        <dbReference type="ChEBI" id="CHEBI:57540"/>
    </ligand>
</feature>
<feature type="binding site" evidence="1">
    <location>
        <position position="293"/>
    </location>
    <ligand>
        <name>NAD(+)</name>
        <dbReference type="ChEBI" id="CHEBI:57540"/>
    </ligand>
</feature>
<feature type="binding site" evidence="1">
    <location>
        <position position="317"/>
    </location>
    <ligand>
        <name>NAD(+)</name>
        <dbReference type="ChEBI" id="CHEBI:57540"/>
    </ligand>
</feature>
<feature type="binding site" evidence="1">
    <location>
        <position position="411"/>
    </location>
    <ligand>
        <name>Zn(2+)</name>
        <dbReference type="ChEBI" id="CHEBI:29105"/>
    </ligand>
</feature>
<feature type="binding site" evidence="1">
    <location>
        <position position="414"/>
    </location>
    <ligand>
        <name>Zn(2+)</name>
        <dbReference type="ChEBI" id="CHEBI:29105"/>
    </ligand>
</feature>
<feature type="binding site" evidence="1">
    <location>
        <position position="429"/>
    </location>
    <ligand>
        <name>Zn(2+)</name>
        <dbReference type="ChEBI" id="CHEBI:29105"/>
    </ligand>
</feature>
<feature type="binding site" evidence="1">
    <location>
        <position position="435"/>
    </location>
    <ligand>
        <name>Zn(2+)</name>
        <dbReference type="ChEBI" id="CHEBI:29105"/>
    </ligand>
</feature>
<accession>Q5ZWX6</accession>
<sequence length="673" mass="74649">MNDQGIKESIETLKEQIRKYDYHYYVLDEPLVPDAEYDRCFKALQQYEEQYPQFLSPDSPTQRVSGTPSDAFMPVAHKQPMLSLSNVFTTDELKAFIKRAIEKLDEPNQQLVFACEPKLDGLAVNMTYEGGILTHAATRGDGAVGENITANIKTIASVPLRLRVSNPPKLIEVRGEVYIPKADFEAYNARARELGEKTFANPRNAAAGSLRQLNPEISASRPLAIYCYGIGACEDYKLPNSHLEQLNLLKEFGFRVSPETRRAVGVEGCLDYYQYMLAKRNQLPFEIDGVVYKIDSISLQQQLGYVSRAPRFACAHKFPATEEMTRLIAVDFQVGRTGAVTPVARLEPVSVGGVTVSNATLHNFDEITRKDIRIGDTVIIRRAGDVIPEVVSVILEKRPANARMIELPKNCPVCGSEVVREADEAIARCVGGLYCKAQLKRMMWHFASRKAMYIEGLGSVLIDQLVDEGIVHHLADLYELDLQTLANLPRMGEKSAKNLLSALEKSKKTTFNRFLYALGIREIGEAGARVLAEHYCDVESLKAATIEELMTLNDIGPVAASHIVHFFAQAHNLEVIDRLLELGIHWPKPEKIQVNQQNPFFGKTVVLTGTLSTMGREEAKAKLLALGAKVSGSVSSKTDYVVAGSEAGSKLIKATELGVAIIEEDEFLKWVNS</sequence>
<organism>
    <name type="scientific">Legionella pneumophila subsp. pneumophila (strain Philadelphia 1 / ATCC 33152 / DSM 7513)</name>
    <dbReference type="NCBI Taxonomy" id="272624"/>
    <lineage>
        <taxon>Bacteria</taxon>
        <taxon>Pseudomonadati</taxon>
        <taxon>Pseudomonadota</taxon>
        <taxon>Gammaproteobacteria</taxon>
        <taxon>Legionellales</taxon>
        <taxon>Legionellaceae</taxon>
        <taxon>Legionella</taxon>
    </lineage>
</organism>